<reference key="1">
    <citation type="journal article" date="2006" name="J. Bacteriol.">
        <title>Complete genome sequence of Yersinia pestis strains Antiqua and Nepal516: evidence of gene reduction in an emerging pathogen.</title>
        <authorList>
            <person name="Chain P.S.G."/>
            <person name="Hu P."/>
            <person name="Malfatti S.A."/>
            <person name="Radnedge L."/>
            <person name="Larimer F."/>
            <person name="Vergez L.M."/>
            <person name="Worsham P."/>
            <person name="Chu M.C."/>
            <person name="Andersen G.L."/>
        </authorList>
    </citation>
    <scope>NUCLEOTIDE SEQUENCE [LARGE SCALE GENOMIC DNA]</scope>
    <source>
        <strain>Nepal516</strain>
    </source>
</reference>
<reference key="2">
    <citation type="submission" date="2009-04" db="EMBL/GenBank/DDBJ databases">
        <title>Yersinia pestis Nepal516A whole genome shotgun sequencing project.</title>
        <authorList>
            <person name="Plunkett G. III"/>
            <person name="Anderson B.D."/>
            <person name="Baumler D.J."/>
            <person name="Burland V."/>
            <person name="Cabot E.L."/>
            <person name="Glasner J.D."/>
            <person name="Mau B."/>
            <person name="Neeno-Eckwall E."/>
            <person name="Perna N.T."/>
            <person name="Munk A.C."/>
            <person name="Tapia R."/>
            <person name="Green L.D."/>
            <person name="Rogers Y.C."/>
            <person name="Detter J.C."/>
            <person name="Bruce D.C."/>
            <person name="Brettin T.S."/>
        </authorList>
    </citation>
    <scope>NUCLEOTIDE SEQUENCE [LARGE SCALE GENOMIC DNA]</scope>
    <source>
        <strain>Nepal516</strain>
    </source>
</reference>
<proteinExistence type="inferred from homology"/>
<feature type="chain" id="PRO_0000258434" description="Phosphoribosylformylglycinamidine cyclo-ligase">
    <location>
        <begin position="1"/>
        <end position="347"/>
    </location>
</feature>
<protein>
    <recommendedName>
        <fullName evidence="1">Phosphoribosylformylglycinamidine cyclo-ligase</fullName>
        <ecNumber evidence="1">6.3.3.1</ecNumber>
    </recommendedName>
    <alternativeName>
        <fullName evidence="1">AIR synthase</fullName>
    </alternativeName>
    <alternativeName>
        <fullName evidence="1">AIRS</fullName>
    </alternativeName>
    <alternativeName>
        <fullName evidence="1">Phosphoribosyl-aminoimidazole synthetase</fullName>
    </alternativeName>
</protein>
<name>PUR5_YERPN</name>
<keyword id="KW-0067">ATP-binding</keyword>
<keyword id="KW-0963">Cytoplasm</keyword>
<keyword id="KW-0436">Ligase</keyword>
<keyword id="KW-0547">Nucleotide-binding</keyword>
<keyword id="KW-0658">Purine biosynthesis</keyword>
<dbReference type="EC" id="6.3.3.1" evidence="1"/>
<dbReference type="EMBL" id="CP000305">
    <property type="protein sequence ID" value="ABG17640.1"/>
    <property type="molecule type" value="Genomic_DNA"/>
</dbReference>
<dbReference type="EMBL" id="ACNQ01000008">
    <property type="protein sequence ID" value="EEO77757.1"/>
    <property type="molecule type" value="Genomic_DNA"/>
</dbReference>
<dbReference type="RefSeq" id="WP_002209777.1">
    <property type="nucleotide sequence ID" value="NZ_ACNQ01000008.1"/>
</dbReference>
<dbReference type="SMR" id="Q1CK40"/>
<dbReference type="GeneID" id="57975788"/>
<dbReference type="KEGG" id="ypn:YPN_1310"/>
<dbReference type="HOGENOM" id="CLU_047116_0_0_6"/>
<dbReference type="UniPathway" id="UPA00074">
    <property type="reaction ID" value="UER00129"/>
</dbReference>
<dbReference type="Proteomes" id="UP000008936">
    <property type="component" value="Chromosome"/>
</dbReference>
<dbReference type="GO" id="GO:0005829">
    <property type="term" value="C:cytosol"/>
    <property type="evidence" value="ECO:0007669"/>
    <property type="project" value="TreeGrafter"/>
</dbReference>
<dbReference type="GO" id="GO:0005524">
    <property type="term" value="F:ATP binding"/>
    <property type="evidence" value="ECO:0007669"/>
    <property type="project" value="UniProtKB-KW"/>
</dbReference>
<dbReference type="GO" id="GO:0004637">
    <property type="term" value="F:phosphoribosylamine-glycine ligase activity"/>
    <property type="evidence" value="ECO:0007669"/>
    <property type="project" value="TreeGrafter"/>
</dbReference>
<dbReference type="GO" id="GO:0004641">
    <property type="term" value="F:phosphoribosylformylglycinamidine cyclo-ligase activity"/>
    <property type="evidence" value="ECO:0007669"/>
    <property type="project" value="UniProtKB-UniRule"/>
</dbReference>
<dbReference type="GO" id="GO:0006189">
    <property type="term" value="P:'de novo' IMP biosynthetic process"/>
    <property type="evidence" value="ECO:0007669"/>
    <property type="project" value="UniProtKB-UniRule"/>
</dbReference>
<dbReference type="GO" id="GO:0046084">
    <property type="term" value="P:adenine biosynthetic process"/>
    <property type="evidence" value="ECO:0007669"/>
    <property type="project" value="TreeGrafter"/>
</dbReference>
<dbReference type="CDD" id="cd02196">
    <property type="entry name" value="PurM"/>
    <property type="match status" value="1"/>
</dbReference>
<dbReference type="FunFam" id="3.30.1330.10:FF:000001">
    <property type="entry name" value="Phosphoribosylformylglycinamidine cyclo-ligase"/>
    <property type="match status" value="1"/>
</dbReference>
<dbReference type="FunFam" id="3.90.650.10:FF:000001">
    <property type="entry name" value="Phosphoribosylformylglycinamidine cyclo-ligase"/>
    <property type="match status" value="1"/>
</dbReference>
<dbReference type="Gene3D" id="3.90.650.10">
    <property type="entry name" value="PurM-like C-terminal domain"/>
    <property type="match status" value="1"/>
</dbReference>
<dbReference type="Gene3D" id="3.30.1330.10">
    <property type="entry name" value="PurM-like, N-terminal domain"/>
    <property type="match status" value="1"/>
</dbReference>
<dbReference type="HAMAP" id="MF_00741">
    <property type="entry name" value="AIRS"/>
    <property type="match status" value="1"/>
</dbReference>
<dbReference type="InterPro" id="IPR010918">
    <property type="entry name" value="PurM-like_C_dom"/>
</dbReference>
<dbReference type="InterPro" id="IPR036676">
    <property type="entry name" value="PurM-like_C_sf"/>
</dbReference>
<dbReference type="InterPro" id="IPR016188">
    <property type="entry name" value="PurM-like_N"/>
</dbReference>
<dbReference type="InterPro" id="IPR036921">
    <property type="entry name" value="PurM-like_N_sf"/>
</dbReference>
<dbReference type="InterPro" id="IPR004733">
    <property type="entry name" value="PurM_cligase"/>
</dbReference>
<dbReference type="NCBIfam" id="TIGR00878">
    <property type="entry name" value="purM"/>
    <property type="match status" value="1"/>
</dbReference>
<dbReference type="PANTHER" id="PTHR10520:SF12">
    <property type="entry name" value="TRIFUNCTIONAL PURINE BIOSYNTHETIC PROTEIN ADENOSINE-3"/>
    <property type="match status" value="1"/>
</dbReference>
<dbReference type="PANTHER" id="PTHR10520">
    <property type="entry name" value="TRIFUNCTIONAL PURINE BIOSYNTHETIC PROTEIN ADENOSINE-3-RELATED"/>
    <property type="match status" value="1"/>
</dbReference>
<dbReference type="Pfam" id="PF00586">
    <property type="entry name" value="AIRS"/>
    <property type="match status" value="1"/>
</dbReference>
<dbReference type="Pfam" id="PF02769">
    <property type="entry name" value="AIRS_C"/>
    <property type="match status" value="1"/>
</dbReference>
<dbReference type="SUPFAM" id="SSF56042">
    <property type="entry name" value="PurM C-terminal domain-like"/>
    <property type="match status" value="1"/>
</dbReference>
<dbReference type="SUPFAM" id="SSF55326">
    <property type="entry name" value="PurM N-terminal domain-like"/>
    <property type="match status" value="1"/>
</dbReference>
<gene>
    <name evidence="1" type="primary">purM</name>
    <name type="ordered locus">YPN_1310</name>
    <name type="ORF">YP516_1442</name>
</gene>
<comment type="catalytic activity">
    <reaction evidence="1">
        <text>2-formamido-N(1)-(5-O-phospho-beta-D-ribosyl)acetamidine + ATP = 5-amino-1-(5-phospho-beta-D-ribosyl)imidazole + ADP + phosphate + H(+)</text>
        <dbReference type="Rhea" id="RHEA:23032"/>
        <dbReference type="ChEBI" id="CHEBI:15378"/>
        <dbReference type="ChEBI" id="CHEBI:30616"/>
        <dbReference type="ChEBI" id="CHEBI:43474"/>
        <dbReference type="ChEBI" id="CHEBI:137981"/>
        <dbReference type="ChEBI" id="CHEBI:147287"/>
        <dbReference type="ChEBI" id="CHEBI:456216"/>
        <dbReference type="EC" id="6.3.3.1"/>
    </reaction>
</comment>
<comment type="pathway">
    <text evidence="1">Purine metabolism; IMP biosynthesis via de novo pathway; 5-amino-1-(5-phospho-D-ribosyl)imidazole from N(2)-formyl-N(1)-(5-phospho-D-ribosyl)glycinamide: step 2/2.</text>
</comment>
<comment type="subcellular location">
    <subcellularLocation>
        <location evidence="1">Cytoplasm</location>
    </subcellularLocation>
</comment>
<comment type="similarity">
    <text evidence="1">Belongs to the AIR synthase family.</text>
</comment>
<sequence>MTNKTSLSYKDAGVDIDAGNDLVDRIKGVVKQTRRPEVMGGLGGFGALCALPQKYREPILVSGTDGVGTKLRLAMDLKRHDTIGIDLVAMCVNDLVVQGAEPLFFLDYFATGKLDVDTAASVITGIAEGCKQSGCALVGGETAEMPGMYHGDDYDVAGFCVGVVEKSEIIDGSKVTPGDVLVALGASGPHSNGYSLVRKILDVSNTNPEQTSLEGKSLADHLLEPTKIYVKSILSLIEQLDIHAIAHLTGGGFWENIPRVLPQGMQAVIDEASWQWPAVFSWLQQAGNVSRHEMYRTFNCGVGMVVALPAELADKAVELLTASGEKAWKIGVIAAATEGAEQVIINP</sequence>
<accession>Q1CK40</accession>
<accession>C4GRR6</accession>
<organism>
    <name type="scientific">Yersinia pestis bv. Antiqua (strain Nepal516)</name>
    <dbReference type="NCBI Taxonomy" id="377628"/>
    <lineage>
        <taxon>Bacteria</taxon>
        <taxon>Pseudomonadati</taxon>
        <taxon>Pseudomonadota</taxon>
        <taxon>Gammaproteobacteria</taxon>
        <taxon>Enterobacterales</taxon>
        <taxon>Yersiniaceae</taxon>
        <taxon>Yersinia</taxon>
    </lineage>
</organism>
<evidence type="ECO:0000255" key="1">
    <source>
        <dbReference type="HAMAP-Rule" id="MF_00741"/>
    </source>
</evidence>